<feature type="chain" id="PRO_0000175994" description="UPF0178 protein PFL_5989">
    <location>
        <begin position="1"/>
        <end position="151"/>
    </location>
</feature>
<accession>Q4K3Y6</accession>
<proteinExistence type="inferred from homology"/>
<evidence type="ECO:0000255" key="1">
    <source>
        <dbReference type="HAMAP-Rule" id="MF_00489"/>
    </source>
</evidence>
<organism>
    <name type="scientific">Pseudomonas fluorescens (strain ATCC BAA-477 / NRRL B-23932 / Pf-5)</name>
    <dbReference type="NCBI Taxonomy" id="220664"/>
    <lineage>
        <taxon>Bacteria</taxon>
        <taxon>Pseudomonadati</taxon>
        <taxon>Pseudomonadota</taxon>
        <taxon>Gammaproteobacteria</taxon>
        <taxon>Pseudomonadales</taxon>
        <taxon>Pseudomonadaceae</taxon>
        <taxon>Pseudomonas</taxon>
    </lineage>
</organism>
<dbReference type="EMBL" id="CP000076">
    <property type="protein sequence ID" value="AAY95179.1"/>
    <property type="molecule type" value="Genomic_DNA"/>
</dbReference>
<dbReference type="RefSeq" id="WP_011064162.1">
    <property type="nucleotide sequence ID" value="NC_004129.6"/>
</dbReference>
<dbReference type="SMR" id="Q4K3Y6"/>
<dbReference type="KEGG" id="pfl:PFL_5989"/>
<dbReference type="PATRIC" id="fig|220664.5.peg.6109"/>
<dbReference type="eggNOG" id="COG1671">
    <property type="taxonomic scope" value="Bacteria"/>
</dbReference>
<dbReference type="HOGENOM" id="CLU_106619_2_1_6"/>
<dbReference type="Proteomes" id="UP000008540">
    <property type="component" value="Chromosome"/>
</dbReference>
<dbReference type="CDD" id="cd18720">
    <property type="entry name" value="PIN_YqxD-like"/>
    <property type="match status" value="1"/>
</dbReference>
<dbReference type="HAMAP" id="MF_00489">
    <property type="entry name" value="UPF0178"/>
    <property type="match status" value="1"/>
</dbReference>
<dbReference type="InterPro" id="IPR003791">
    <property type="entry name" value="UPF0178"/>
</dbReference>
<dbReference type="NCBIfam" id="NF001095">
    <property type="entry name" value="PRK00124.1"/>
    <property type="match status" value="1"/>
</dbReference>
<dbReference type="PANTHER" id="PTHR35146">
    <property type="entry name" value="UPF0178 PROTEIN YAII"/>
    <property type="match status" value="1"/>
</dbReference>
<dbReference type="PANTHER" id="PTHR35146:SF1">
    <property type="entry name" value="UPF0178 PROTEIN YAII"/>
    <property type="match status" value="1"/>
</dbReference>
<dbReference type="Pfam" id="PF02639">
    <property type="entry name" value="DUF188"/>
    <property type="match status" value="1"/>
</dbReference>
<protein>
    <recommendedName>
        <fullName evidence="1">UPF0178 protein PFL_5989</fullName>
    </recommendedName>
</protein>
<name>Y5989_PSEF5</name>
<reference key="1">
    <citation type="journal article" date="2005" name="Nat. Biotechnol.">
        <title>Complete genome sequence of the plant commensal Pseudomonas fluorescens Pf-5.</title>
        <authorList>
            <person name="Paulsen I.T."/>
            <person name="Press C.M."/>
            <person name="Ravel J."/>
            <person name="Kobayashi D.Y."/>
            <person name="Myers G.S.A."/>
            <person name="Mavrodi D.V."/>
            <person name="DeBoy R.T."/>
            <person name="Seshadri R."/>
            <person name="Ren Q."/>
            <person name="Madupu R."/>
            <person name="Dodson R.J."/>
            <person name="Durkin A.S."/>
            <person name="Brinkac L.M."/>
            <person name="Daugherty S.C."/>
            <person name="Sullivan S.A."/>
            <person name="Rosovitz M.J."/>
            <person name="Gwinn M.L."/>
            <person name="Zhou L."/>
            <person name="Schneider D.J."/>
            <person name="Cartinhour S.W."/>
            <person name="Nelson W.C."/>
            <person name="Weidman J."/>
            <person name="Watkins K."/>
            <person name="Tran K."/>
            <person name="Khouri H."/>
            <person name="Pierson E.A."/>
            <person name="Pierson L.S. III"/>
            <person name="Thomashow L.S."/>
            <person name="Loper J.E."/>
        </authorList>
    </citation>
    <scope>NUCLEOTIDE SEQUENCE [LARGE SCALE GENOMIC DNA]</scope>
    <source>
        <strain>ATCC BAA-477 / NRRL B-23932 / Pf-5</strain>
    </source>
</reference>
<comment type="similarity">
    <text evidence="1">Belongs to the UPF0178 family.</text>
</comment>
<gene>
    <name type="ordered locus">PFL_5989</name>
</gene>
<sequence>MRVWIDADACPKAAKDQVVRFALKRQFEVVLVAGQAQIKPAFACVRLIVVPSGPDAADDYLVEHAVPGELVICSDVPLADRLVKKGLAALDPRGKEFDAQNMGERLAVRNLFTDLREQGQVSGGQAPYGDREKQAFANALDRILTRLARQA</sequence>